<comment type="function">
    <text evidence="3">Mu-conotoxins block voltage-gated sodium channels. This toxin reversibly blocks voltage-gated sodium channel in cephalopods (tested on squid giant-fiber-lobe neurons) with an inhibitor constant (Ki) of 15 nmol/l, with no alteration in the voltage dependence of sodium conductance or on the kinetics of inactivation. Has no effect on sodium channels of the two gastropod S.luhuanus and A.californica (which are not natural prey).</text>
</comment>
<comment type="subcellular location">
    <subcellularLocation>
        <location evidence="3">Secreted</location>
    </subcellularLocation>
</comment>
<comment type="tissue specificity">
    <text evidence="3">Expressed by the venom duct.</text>
</comment>
<comment type="domain">
    <text>The cysteine framework is XII (C-C-C-C-CC-C-C).</text>
</comment>
<comment type="mass spectrometry" mass="5194.0" method="MALDI" evidence="3"/>
<comment type="similarity">
    <text evidence="4">Belongs to the conotoxin O1 superfamily.</text>
</comment>
<keyword id="KW-0102">Bromination</keyword>
<keyword id="KW-0903">Direct protein sequencing</keyword>
<keyword id="KW-1015">Disulfide bond</keyword>
<keyword id="KW-0379">Hydroxylation</keyword>
<keyword id="KW-0872">Ion channel impairing toxin</keyword>
<keyword id="KW-0528">Neurotoxin</keyword>
<keyword id="KW-0964">Secreted</keyword>
<keyword id="KW-0732">Signal</keyword>
<keyword id="KW-0800">Toxin</keyword>
<dbReference type="EMBL" id="EF644175">
    <property type="protein sequence ID" value="ABR92945.1"/>
    <property type="molecule type" value="mRNA"/>
</dbReference>
<dbReference type="ConoServer" id="794">
    <property type="toxin name" value="Cal12.1.1b precursor"/>
</dbReference>
<dbReference type="GO" id="GO:0005576">
    <property type="term" value="C:extracellular region"/>
    <property type="evidence" value="ECO:0007669"/>
    <property type="project" value="UniProtKB-SubCell"/>
</dbReference>
<dbReference type="GO" id="GO:0008200">
    <property type="term" value="F:ion channel inhibitor activity"/>
    <property type="evidence" value="ECO:0007669"/>
    <property type="project" value="InterPro"/>
</dbReference>
<dbReference type="GO" id="GO:0090729">
    <property type="term" value="F:toxin activity"/>
    <property type="evidence" value="ECO:0007669"/>
    <property type="project" value="UniProtKB-KW"/>
</dbReference>
<dbReference type="InterPro" id="IPR004214">
    <property type="entry name" value="Conotoxin"/>
</dbReference>
<dbReference type="Pfam" id="PF02950">
    <property type="entry name" value="Conotoxin"/>
    <property type="match status" value="1"/>
</dbReference>
<feature type="signal peptide" evidence="2">
    <location>
        <begin position="1"/>
        <end position="19"/>
    </location>
</feature>
<feature type="propeptide" id="PRO_0000392264" evidence="5">
    <location>
        <begin position="20"/>
        <end position="42"/>
    </location>
</feature>
<feature type="peptide" id="PRO_0000392265" description="Mu-conotoxin cal12b">
    <location>
        <begin position="43"/>
        <end position="87"/>
    </location>
</feature>
<feature type="modified residue" description="6'-bromotryptophan" evidence="3">
    <location>
        <position position="59"/>
    </location>
</feature>
<feature type="modified residue" description="4-hydroxyproline" evidence="3">
    <location>
        <position position="65"/>
    </location>
</feature>
<feature type="modified residue" description="6'-bromotryptophan" evidence="3">
    <location>
        <position position="79"/>
    </location>
</feature>
<feature type="modified residue" description="6'-bromotryptophan" evidence="3">
    <location>
        <position position="80"/>
    </location>
</feature>
<feature type="modified residue" description="4-hydroxyproline" evidence="3">
    <location>
        <position position="82"/>
    </location>
</feature>
<feature type="modified residue" description="6'-bromotryptophan" evidence="3">
    <location>
        <position position="86"/>
    </location>
</feature>
<feature type="disulfide bond" evidence="4">
    <location>
        <begin position="45"/>
        <end position="58"/>
    </location>
</feature>
<feature type="disulfide bond" evidence="1">
    <location>
        <begin position="53"/>
        <end position="70"/>
    </location>
</feature>
<feature type="disulfide bond" evidence="1">
    <location>
        <begin position="60"/>
        <end position="75"/>
    </location>
</feature>
<feature type="disulfide bond" evidence="1">
    <location>
        <begin position="69"/>
        <end position="81"/>
    </location>
</feature>
<accession>A6YR21</accession>
<reference key="1">
    <citation type="journal article" date="2011" name="J. Exp. Biol.">
        <title>A diverse family of novel peptide toxins from an unusual cone snail, Conus californicus.</title>
        <authorList>
            <person name="Gilly W.F."/>
            <person name="Richmond T.A."/>
            <person name="Duda T.F. Jr."/>
            <person name="Elliger C."/>
            <person name="Lebaric Z."/>
            <person name="Schulz J."/>
            <person name="Bingham J.P."/>
            <person name="Sweedler J.V."/>
        </authorList>
    </citation>
    <scope>NUCLEOTIDE SEQUENCE [MRNA]</scope>
    <scope>PROTEIN SEQUENCE OF 43-62</scope>
    <scope>FUNCTION</scope>
    <scope>SUBCELLULAR LOCATION</scope>
    <scope>TISSUE SPECIFICITY</scope>
    <scope>MASS SPECTROMETRY</scope>
    <scope>BROMINATION AT TRP-59; TRP-79; TRP-80 AND TRP-86</scope>
    <scope>HYDROXYLATION AT PRO-65 AND PRO-82</scope>
    <source>
        <tissue>Venom</tissue>
        <tissue>Venom duct</tissue>
    </source>
</reference>
<evidence type="ECO:0000250" key="1"/>
<evidence type="ECO:0000255" key="2"/>
<evidence type="ECO:0000269" key="3">
    <source>
    </source>
</evidence>
<evidence type="ECO:0000305" key="4"/>
<evidence type="ECO:0000305" key="5">
    <source>
    </source>
</evidence>
<sequence length="87" mass="9720">MKLTCVLVVLLLLLPYGDLITNNYIRGAARKVTPWRRNLKTRDVCDSLVGGHCIHNGCWCDQDAPHGNCCDTDGCTAAWWCPGTKWD</sequence>
<organism>
    <name type="scientific">Californiconus californicus</name>
    <name type="common">California cone</name>
    <name type="synonym">Conus californicus</name>
    <dbReference type="NCBI Taxonomy" id="1736779"/>
    <lineage>
        <taxon>Eukaryota</taxon>
        <taxon>Metazoa</taxon>
        <taxon>Spiralia</taxon>
        <taxon>Lophotrochozoa</taxon>
        <taxon>Mollusca</taxon>
        <taxon>Gastropoda</taxon>
        <taxon>Caenogastropoda</taxon>
        <taxon>Neogastropoda</taxon>
        <taxon>Conoidea</taxon>
        <taxon>Conidae</taxon>
        <taxon>Californiconus</taxon>
    </lineage>
</organism>
<name>COC1B_CONCL</name>
<protein>
    <recommendedName>
        <fullName>Mu-conotoxin cal12b</fullName>
    </recommendedName>
    <alternativeName>
        <fullName>Conotoxin Cal 12.1.1b</fullName>
    </alternativeName>
    <alternativeName>
        <fullName>Conotoxin CalTx 12.1.1B</fullName>
    </alternativeName>
</protein>
<proteinExistence type="evidence at protein level"/>